<name>PYRF_LACGA</name>
<reference key="1">
    <citation type="journal article" date="2006" name="Proc. Natl. Acad. Sci. U.S.A.">
        <title>Comparative genomics of the lactic acid bacteria.</title>
        <authorList>
            <person name="Makarova K.S."/>
            <person name="Slesarev A."/>
            <person name="Wolf Y.I."/>
            <person name="Sorokin A."/>
            <person name="Mirkin B."/>
            <person name="Koonin E.V."/>
            <person name="Pavlov A."/>
            <person name="Pavlova N."/>
            <person name="Karamychev V."/>
            <person name="Polouchine N."/>
            <person name="Shakhova V."/>
            <person name="Grigoriev I."/>
            <person name="Lou Y."/>
            <person name="Rohksar D."/>
            <person name="Lucas S."/>
            <person name="Huang K."/>
            <person name="Goodstein D.M."/>
            <person name="Hawkins T."/>
            <person name="Plengvidhya V."/>
            <person name="Welker D."/>
            <person name="Hughes J."/>
            <person name="Goh Y."/>
            <person name="Benson A."/>
            <person name="Baldwin K."/>
            <person name="Lee J.-H."/>
            <person name="Diaz-Muniz I."/>
            <person name="Dosti B."/>
            <person name="Smeianov V."/>
            <person name="Wechter W."/>
            <person name="Barabote R."/>
            <person name="Lorca G."/>
            <person name="Altermann E."/>
            <person name="Barrangou R."/>
            <person name="Ganesan B."/>
            <person name="Xie Y."/>
            <person name="Rawsthorne H."/>
            <person name="Tamir D."/>
            <person name="Parker C."/>
            <person name="Breidt F."/>
            <person name="Broadbent J.R."/>
            <person name="Hutkins R."/>
            <person name="O'Sullivan D."/>
            <person name="Steele J."/>
            <person name="Unlu G."/>
            <person name="Saier M.H. Jr."/>
            <person name="Klaenhammer T."/>
            <person name="Richardson P."/>
            <person name="Kozyavkin S."/>
            <person name="Weimer B.C."/>
            <person name="Mills D.A."/>
        </authorList>
    </citation>
    <scope>NUCLEOTIDE SEQUENCE [LARGE SCALE GENOMIC DNA]</scope>
    <source>
        <strain>ATCC 33323 / DSM 20243 / BCRC 14619 / CIP 102991 / JCM 1131 / KCTC 3163 / NCIMB 11718 / NCTC 13722 / AM63</strain>
    </source>
</reference>
<evidence type="ECO:0000255" key="1">
    <source>
        <dbReference type="HAMAP-Rule" id="MF_01200"/>
    </source>
</evidence>
<accession>Q043A6</accession>
<comment type="function">
    <text evidence="1">Catalyzes the decarboxylation of orotidine 5'-monophosphate (OMP) to uridine 5'-monophosphate (UMP).</text>
</comment>
<comment type="catalytic activity">
    <reaction evidence="1">
        <text>orotidine 5'-phosphate + H(+) = UMP + CO2</text>
        <dbReference type="Rhea" id="RHEA:11596"/>
        <dbReference type="ChEBI" id="CHEBI:15378"/>
        <dbReference type="ChEBI" id="CHEBI:16526"/>
        <dbReference type="ChEBI" id="CHEBI:57538"/>
        <dbReference type="ChEBI" id="CHEBI:57865"/>
        <dbReference type="EC" id="4.1.1.23"/>
    </reaction>
</comment>
<comment type="pathway">
    <text evidence="1">Pyrimidine metabolism; UMP biosynthesis via de novo pathway; UMP from orotate: step 2/2.</text>
</comment>
<comment type="subunit">
    <text evidence="1">Homodimer.</text>
</comment>
<comment type="similarity">
    <text evidence="1">Belongs to the OMP decarboxylase family. Type 1 subfamily.</text>
</comment>
<feature type="chain" id="PRO_1000065914" description="Orotidine 5'-phosphate decarboxylase">
    <location>
        <begin position="1"/>
        <end position="235"/>
    </location>
</feature>
<feature type="active site" description="Proton donor" evidence="1">
    <location>
        <position position="62"/>
    </location>
</feature>
<feature type="binding site" evidence="1">
    <location>
        <position position="10"/>
    </location>
    <ligand>
        <name>substrate</name>
    </ligand>
</feature>
<feature type="binding site" evidence="1">
    <location>
        <position position="33"/>
    </location>
    <ligand>
        <name>substrate</name>
    </ligand>
</feature>
<feature type="binding site" evidence="1">
    <location>
        <begin position="60"/>
        <end position="69"/>
    </location>
    <ligand>
        <name>substrate</name>
    </ligand>
</feature>
<feature type="binding site" evidence="1">
    <location>
        <position position="123"/>
    </location>
    <ligand>
        <name>substrate</name>
    </ligand>
</feature>
<feature type="binding site" evidence="1">
    <location>
        <position position="185"/>
    </location>
    <ligand>
        <name>substrate</name>
    </ligand>
</feature>
<feature type="binding site" evidence="1">
    <location>
        <position position="194"/>
    </location>
    <ligand>
        <name>substrate</name>
    </ligand>
</feature>
<feature type="binding site" evidence="1">
    <location>
        <position position="214"/>
    </location>
    <ligand>
        <name>substrate</name>
    </ligand>
</feature>
<feature type="binding site" evidence="1">
    <location>
        <position position="215"/>
    </location>
    <ligand>
        <name>substrate</name>
    </ligand>
</feature>
<dbReference type="EC" id="4.1.1.23" evidence="1"/>
<dbReference type="EMBL" id="CP000413">
    <property type="protein sequence ID" value="ABJ60466.1"/>
    <property type="molecule type" value="Genomic_DNA"/>
</dbReference>
<dbReference type="RefSeq" id="WP_003647206.1">
    <property type="nucleotide sequence ID" value="NZ_WBMG01000002.1"/>
</dbReference>
<dbReference type="SMR" id="Q043A6"/>
<dbReference type="GeneID" id="29638680"/>
<dbReference type="KEGG" id="lga:LGAS_1093"/>
<dbReference type="HOGENOM" id="CLU_067069_1_1_9"/>
<dbReference type="BioCyc" id="LGAS324831:G1G6Y-1092-MONOMER"/>
<dbReference type="UniPathway" id="UPA00070">
    <property type="reaction ID" value="UER00120"/>
</dbReference>
<dbReference type="Proteomes" id="UP000000664">
    <property type="component" value="Chromosome"/>
</dbReference>
<dbReference type="GO" id="GO:0005829">
    <property type="term" value="C:cytosol"/>
    <property type="evidence" value="ECO:0007669"/>
    <property type="project" value="TreeGrafter"/>
</dbReference>
<dbReference type="GO" id="GO:0004590">
    <property type="term" value="F:orotidine-5'-phosphate decarboxylase activity"/>
    <property type="evidence" value="ECO:0007669"/>
    <property type="project" value="UniProtKB-UniRule"/>
</dbReference>
<dbReference type="GO" id="GO:0006207">
    <property type="term" value="P:'de novo' pyrimidine nucleobase biosynthetic process"/>
    <property type="evidence" value="ECO:0007669"/>
    <property type="project" value="InterPro"/>
</dbReference>
<dbReference type="GO" id="GO:0044205">
    <property type="term" value="P:'de novo' UMP biosynthetic process"/>
    <property type="evidence" value="ECO:0007669"/>
    <property type="project" value="UniProtKB-UniRule"/>
</dbReference>
<dbReference type="CDD" id="cd04725">
    <property type="entry name" value="OMP_decarboxylase_like"/>
    <property type="match status" value="1"/>
</dbReference>
<dbReference type="FunFam" id="3.20.20.70:FF:000015">
    <property type="entry name" value="Orotidine 5'-phosphate decarboxylase"/>
    <property type="match status" value="1"/>
</dbReference>
<dbReference type="Gene3D" id="3.20.20.70">
    <property type="entry name" value="Aldolase class I"/>
    <property type="match status" value="1"/>
</dbReference>
<dbReference type="HAMAP" id="MF_01200_B">
    <property type="entry name" value="OMPdecase_type1_B"/>
    <property type="match status" value="1"/>
</dbReference>
<dbReference type="InterPro" id="IPR013785">
    <property type="entry name" value="Aldolase_TIM"/>
</dbReference>
<dbReference type="InterPro" id="IPR014732">
    <property type="entry name" value="OMPdecase"/>
</dbReference>
<dbReference type="InterPro" id="IPR018089">
    <property type="entry name" value="OMPdecase_AS"/>
</dbReference>
<dbReference type="InterPro" id="IPR047596">
    <property type="entry name" value="OMPdecase_bac"/>
</dbReference>
<dbReference type="InterPro" id="IPR001754">
    <property type="entry name" value="OMPdeCOase_dom"/>
</dbReference>
<dbReference type="InterPro" id="IPR011060">
    <property type="entry name" value="RibuloseP-bd_barrel"/>
</dbReference>
<dbReference type="NCBIfam" id="NF001273">
    <property type="entry name" value="PRK00230.1"/>
    <property type="match status" value="1"/>
</dbReference>
<dbReference type="NCBIfam" id="TIGR01740">
    <property type="entry name" value="pyrF"/>
    <property type="match status" value="1"/>
</dbReference>
<dbReference type="PANTHER" id="PTHR32119">
    <property type="entry name" value="OROTIDINE 5'-PHOSPHATE DECARBOXYLASE"/>
    <property type="match status" value="1"/>
</dbReference>
<dbReference type="PANTHER" id="PTHR32119:SF2">
    <property type="entry name" value="OROTIDINE 5'-PHOSPHATE DECARBOXYLASE"/>
    <property type="match status" value="1"/>
</dbReference>
<dbReference type="Pfam" id="PF00215">
    <property type="entry name" value="OMPdecase"/>
    <property type="match status" value="1"/>
</dbReference>
<dbReference type="SMART" id="SM00934">
    <property type="entry name" value="OMPdecase"/>
    <property type="match status" value="1"/>
</dbReference>
<dbReference type="SUPFAM" id="SSF51366">
    <property type="entry name" value="Ribulose-phoshate binding barrel"/>
    <property type="match status" value="1"/>
</dbReference>
<dbReference type="PROSITE" id="PS00156">
    <property type="entry name" value="OMPDECASE"/>
    <property type="match status" value="1"/>
</dbReference>
<sequence length="235" mass="25370">MTRPVIVALDLDNEKKLNELLPKLGKPENVFIKIGMELFFNEGPAIVRNLSRQGYQIFLDLKMSDIPNTVYNGAKALAQLGITYTTVHALGGSQMIKAAKEGLIAGTPVGKNIPKLLAVTELTSISDDILHEEQNCNLSMNQQVLSLAETAKKAGADGVICSPLEVKNLRQNVGDDFLYVTPGIRPAGNAKDDQSRVATPAQAKEWGSTAIVVGRPITLATNPEAAYEAIKKEFN</sequence>
<organism>
    <name type="scientific">Lactobacillus gasseri (strain ATCC 33323 / DSM 20243 / BCRC 14619 / CIP 102991 / JCM 1131 / KCTC 3163 / NCIMB 11718 / NCTC 13722 / AM63)</name>
    <dbReference type="NCBI Taxonomy" id="324831"/>
    <lineage>
        <taxon>Bacteria</taxon>
        <taxon>Bacillati</taxon>
        <taxon>Bacillota</taxon>
        <taxon>Bacilli</taxon>
        <taxon>Lactobacillales</taxon>
        <taxon>Lactobacillaceae</taxon>
        <taxon>Lactobacillus</taxon>
    </lineage>
</organism>
<proteinExistence type="inferred from homology"/>
<protein>
    <recommendedName>
        <fullName evidence="1">Orotidine 5'-phosphate decarboxylase</fullName>
        <ecNumber evidence="1">4.1.1.23</ecNumber>
    </recommendedName>
    <alternativeName>
        <fullName evidence="1">OMP decarboxylase</fullName>
        <shortName evidence="1">OMPDCase</shortName>
        <shortName evidence="1">OMPdecase</shortName>
    </alternativeName>
</protein>
<gene>
    <name evidence="1" type="primary">pyrF</name>
    <name type="ordered locus">LGAS_1093</name>
</gene>
<keyword id="KW-0210">Decarboxylase</keyword>
<keyword id="KW-0456">Lyase</keyword>
<keyword id="KW-0665">Pyrimidine biosynthesis</keyword>